<gene>
    <name type="ordered locus">MUL_1490</name>
</gene>
<accession>A0PNU3</accession>
<evidence type="ECO:0000255" key="1">
    <source>
        <dbReference type="HAMAP-Rule" id="MF_01340"/>
    </source>
</evidence>
<feature type="chain" id="PRO_1000067657" description="UPF0353 protein MUL_1490">
    <location>
        <begin position="1"/>
        <end position="335"/>
    </location>
</feature>
<feature type="transmembrane region" description="Helical" evidence="1">
    <location>
        <begin position="18"/>
        <end position="38"/>
    </location>
</feature>
<feature type="transmembrane region" description="Helical" evidence="1">
    <location>
        <begin position="67"/>
        <end position="87"/>
    </location>
</feature>
<feature type="transmembrane region" description="Helical" evidence="1">
    <location>
        <begin position="309"/>
        <end position="329"/>
    </location>
</feature>
<feature type="domain" description="VWFA" evidence="1">
    <location>
        <begin position="98"/>
        <end position="298"/>
    </location>
</feature>
<name>Y1490_MYCUA</name>
<proteinExistence type="inferred from homology"/>
<organism>
    <name type="scientific">Mycobacterium ulcerans (strain Agy99)</name>
    <dbReference type="NCBI Taxonomy" id="362242"/>
    <lineage>
        <taxon>Bacteria</taxon>
        <taxon>Bacillati</taxon>
        <taxon>Actinomycetota</taxon>
        <taxon>Actinomycetes</taxon>
        <taxon>Mycobacteriales</taxon>
        <taxon>Mycobacteriaceae</taxon>
        <taxon>Mycobacterium</taxon>
        <taxon>Mycobacterium ulcerans group</taxon>
    </lineage>
</organism>
<comment type="subcellular location">
    <subcellularLocation>
        <location evidence="1">Cell membrane</location>
        <topology evidence="1">Multi-pass membrane protein</topology>
    </subcellularLocation>
</comment>
<comment type="similarity">
    <text evidence="1">Belongs to the UPF0353 family.</text>
</comment>
<sequence length="335" mass="35933">MTLPLLGPMTLSGFAHSWFFLFLLVVAGLIAIYVVLQLARQKRMLRFANMELLESVAPQRPSRYRHIPAMLLALSLVLFTVAMAGPTHDVRIPRNRAVVMLVIDVSQSMRATDVEPNRMVAAQEAAKQFADELTPGINLGLIAYAGTATVLVSPTTNREATKAALDKLQFADRTATGEAIFTALQAIATVGAVIGGGDTPPPARIVLFSDGKETMPTNPDNPKGAYTAARTAKDQGVPISTISFGTPYGFVEINDQRQPVPVDDETMKKVAQLSGGNSYNAATLAELNSVYVSLQQQIGYETIRGDASMGWLRLGALVLVAAALAALLINRRLPT</sequence>
<protein>
    <recommendedName>
        <fullName evidence="1">UPF0353 protein MUL_1490</fullName>
    </recommendedName>
</protein>
<dbReference type="EMBL" id="CP000325">
    <property type="protein sequence ID" value="ABL04012.1"/>
    <property type="molecule type" value="Genomic_DNA"/>
</dbReference>
<dbReference type="RefSeq" id="WP_011739632.1">
    <property type="nucleotide sequence ID" value="NC_008611.1"/>
</dbReference>
<dbReference type="SMR" id="A0PNU3"/>
<dbReference type="KEGG" id="mul:MUL_1490"/>
<dbReference type="eggNOG" id="COG2304">
    <property type="taxonomic scope" value="Bacteria"/>
</dbReference>
<dbReference type="HOGENOM" id="CLU_024570_2_0_11"/>
<dbReference type="Proteomes" id="UP000000765">
    <property type="component" value="Chromosome"/>
</dbReference>
<dbReference type="GO" id="GO:0005886">
    <property type="term" value="C:plasma membrane"/>
    <property type="evidence" value="ECO:0007669"/>
    <property type="project" value="UniProtKB-SubCell"/>
</dbReference>
<dbReference type="CDD" id="cd00198">
    <property type="entry name" value="vWFA"/>
    <property type="match status" value="1"/>
</dbReference>
<dbReference type="FunFam" id="3.40.50.410:FF:000078">
    <property type="entry name" value="UPF0353 protein RN09_1826"/>
    <property type="match status" value="1"/>
</dbReference>
<dbReference type="Gene3D" id="3.40.50.410">
    <property type="entry name" value="von Willebrand factor, type A domain"/>
    <property type="match status" value="1"/>
</dbReference>
<dbReference type="HAMAP" id="MF_01340">
    <property type="entry name" value="UPF0353"/>
    <property type="match status" value="1"/>
</dbReference>
<dbReference type="InterPro" id="IPR024163">
    <property type="entry name" value="Aerotolerance_reg_N"/>
</dbReference>
<dbReference type="InterPro" id="IPR022933">
    <property type="entry name" value="UPF0353"/>
</dbReference>
<dbReference type="InterPro" id="IPR050768">
    <property type="entry name" value="UPF0353/GerABKA_families"/>
</dbReference>
<dbReference type="InterPro" id="IPR002035">
    <property type="entry name" value="VWF_A"/>
</dbReference>
<dbReference type="InterPro" id="IPR036465">
    <property type="entry name" value="vWFA_dom_sf"/>
</dbReference>
<dbReference type="NCBIfam" id="NF010238">
    <property type="entry name" value="PRK13685.1"/>
    <property type="match status" value="1"/>
</dbReference>
<dbReference type="PANTHER" id="PTHR22550:SF5">
    <property type="entry name" value="LEUCINE ZIPPER PROTEIN 4"/>
    <property type="match status" value="1"/>
</dbReference>
<dbReference type="PANTHER" id="PTHR22550">
    <property type="entry name" value="SPORE GERMINATION PROTEIN"/>
    <property type="match status" value="1"/>
</dbReference>
<dbReference type="Pfam" id="PF07584">
    <property type="entry name" value="BatA"/>
    <property type="match status" value="1"/>
</dbReference>
<dbReference type="Pfam" id="PF13519">
    <property type="entry name" value="VWA_2"/>
    <property type="match status" value="1"/>
</dbReference>
<dbReference type="SMART" id="SM00327">
    <property type="entry name" value="VWA"/>
    <property type="match status" value="1"/>
</dbReference>
<dbReference type="SUPFAM" id="SSF53300">
    <property type="entry name" value="vWA-like"/>
    <property type="match status" value="1"/>
</dbReference>
<dbReference type="PROSITE" id="PS50234">
    <property type="entry name" value="VWFA"/>
    <property type="match status" value="1"/>
</dbReference>
<keyword id="KW-1003">Cell membrane</keyword>
<keyword id="KW-0472">Membrane</keyword>
<keyword id="KW-0812">Transmembrane</keyword>
<keyword id="KW-1133">Transmembrane helix</keyword>
<reference key="1">
    <citation type="journal article" date="2007" name="Genome Res.">
        <title>Reductive evolution and niche adaptation inferred from the genome of Mycobacterium ulcerans, the causative agent of Buruli ulcer.</title>
        <authorList>
            <person name="Stinear T.P."/>
            <person name="Seemann T."/>
            <person name="Pidot S."/>
            <person name="Frigui W."/>
            <person name="Reysset G."/>
            <person name="Garnier T."/>
            <person name="Meurice G."/>
            <person name="Simon D."/>
            <person name="Bouchier C."/>
            <person name="Ma L."/>
            <person name="Tichit M."/>
            <person name="Porter J.L."/>
            <person name="Ryan J."/>
            <person name="Johnson P.D.R."/>
            <person name="Davies J.K."/>
            <person name="Jenkin G.A."/>
            <person name="Small P.L.C."/>
            <person name="Jones L.M."/>
            <person name="Tekaia F."/>
            <person name="Laval F."/>
            <person name="Daffe M."/>
            <person name="Parkhill J."/>
            <person name="Cole S.T."/>
        </authorList>
    </citation>
    <scope>NUCLEOTIDE SEQUENCE [LARGE SCALE GENOMIC DNA]</scope>
    <source>
        <strain>Agy99</strain>
    </source>
</reference>